<feature type="signal peptide" evidence="1">
    <location>
        <begin position="1"/>
        <end position="22"/>
    </location>
</feature>
<feature type="chain" id="PRO_0000031845" description="Choline-binding protein">
    <location>
        <begin position="23"/>
        <end position="306"/>
    </location>
</feature>
<feature type="lipid moiety-binding region" description="N-palmitoyl cysteine" evidence="4">
    <location>
        <position position="23"/>
    </location>
</feature>
<feature type="lipid moiety-binding region" description="S-diacylglycerol cysteine" evidence="4">
    <location>
        <position position="23"/>
    </location>
</feature>
<feature type="sequence variant" description="In strain: ATCC 6633.">
    <original>L</original>
    <variation>W</variation>
    <location>
        <position position="8"/>
    </location>
</feature>
<feature type="sequence variant" description="In strain: ATCC 6633.">
    <original>A</original>
    <variation>T</variation>
    <location>
        <position position="13"/>
    </location>
</feature>
<feature type="sequence variant" description="In strain: ATCC 6633.">
    <original>A</original>
    <variation>S</variation>
    <location>
        <position position="32"/>
    </location>
</feature>
<feature type="sequence variant" description="In strain: ATCC 6633.">
    <original>G</original>
    <variation>R</variation>
    <location>
        <position position="84"/>
    </location>
</feature>
<feature type="sequence variant" description="In strain: ATCC 6633.">
    <original>D</original>
    <variation>E</variation>
    <location>
        <position position="111"/>
    </location>
</feature>
<feature type="sequence variant" description="In strain: ATCC 6633.">
    <original>E</original>
    <variation>K</variation>
    <location>
        <position position="146"/>
    </location>
</feature>
<feature type="sequence variant" description="In strain: ATCC 6633.">
    <original>T</original>
    <variation>N</variation>
    <location>
        <position position="155"/>
    </location>
</feature>
<feature type="sequence variant" description="In strain: ATCC 6633.">
    <original>G</original>
    <variation>S</variation>
    <location>
        <position position="194"/>
    </location>
</feature>
<feature type="sequence variant" description="In strain: ATCC 6633.">
    <original>K</original>
    <variation>Q</variation>
    <location>
        <position position="252"/>
    </location>
</feature>
<feature type="sequence conflict" description="In Ref. 1; AAB01534." evidence="4" ref="1">
    <original>TLT</original>
    <variation>MLP</variation>
    <location>
        <begin position="17"/>
        <end position="19"/>
    </location>
</feature>
<feature type="sequence conflict" description="In Ref. 1; AAB01534." evidence="4" ref="1">
    <original>NYWMKLKGNGYQDFTKT</original>
    <variation>KVLDEAQGERLSRFYEN</variation>
    <location>
        <begin position="172"/>
        <end position="188"/>
    </location>
</feature>
<feature type="sequence conflict" description="In Ref. 1; AAB01534." evidence="4" ref="1">
    <original>IIKKML</original>
    <variation>TIQKMI</variation>
    <location>
        <begin position="263"/>
        <end position="268"/>
    </location>
</feature>
<feature type="sequence conflict" description="In Ref. 1; AAB01534." evidence="4" ref="1">
    <original>EYLEKHRYFES</original>
    <variation>AIFRKAPLLRIVKGGRSQ</variation>
    <location>
        <begin position="296"/>
        <end position="306"/>
    </location>
</feature>
<feature type="helix" evidence="6">
    <location>
        <begin position="28"/>
        <end position="33"/>
    </location>
</feature>
<feature type="strand" evidence="6">
    <location>
        <begin position="36"/>
        <end position="43"/>
    </location>
</feature>
<feature type="helix" evidence="6">
    <location>
        <begin position="44"/>
        <end position="60"/>
    </location>
</feature>
<feature type="strand" evidence="6">
    <location>
        <begin position="65"/>
        <end position="71"/>
    </location>
</feature>
<feature type="helix" evidence="6">
    <location>
        <begin position="74"/>
        <end position="82"/>
    </location>
</feature>
<feature type="strand" evidence="6">
    <location>
        <begin position="87"/>
        <end position="93"/>
    </location>
</feature>
<feature type="helix" evidence="6">
    <location>
        <begin position="94"/>
        <end position="100"/>
    </location>
</feature>
<feature type="helix" evidence="6">
    <location>
        <begin position="110"/>
        <end position="125"/>
    </location>
</feature>
<feature type="strand" evidence="6">
    <location>
        <begin position="127"/>
        <end position="129"/>
    </location>
</feature>
<feature type="strand" evidence="6">
    <location>
        <begin position="139"/>
        <end position="143"/>
    </location>
</feature>
<feature type="helix" evidence="6">
    <location>
        <begin position="145"/>
        <end position="151"/>
    </location>
</feature>
<feature type="strand" evidence="5">
    <location>
        <begin position="154"/>
        <end position="156"/>
    </location>
</feature>
<feature type="helix" evidence="6">
    <location>
        <begin position="157"/>
        <end position="165"/>
    </location>
</feature>
<feature type="strand" evidence="6">
    <location>
        <begin position="167"/>
        <end position="170"/>
    </location>
</feature>
<feature type="helix" evidence="6">
    <location>
        <begin position="174"/>
        <end position="176"/>
    </location>
</feature>
<feature type="strand" evidence="6">
    <location>
        <begin position="178"/>
        <end position="181"/>
    </location>
</feature>
<feature type="helix" evidence="6">
    <location>
        <begin position="182"/>
        <end position="189"/>
    </location>
</feature>
<feature type="strand" evidence="6">
    <location>
        <begin position="194"/>
        <end position="198"/>
    </location>
</feature>
<feature type="helix" evidence="6">
    <location>
        <begin position="201"/>
        <end position="203"/>
    </location>
</feature>
<feature type="helix" evidence="6">
    <location>
        <begin position="204"/>
        <end position="209"/>
    </location>
</feature>
<feature type="strand" evidence="6">
    <location>
        <begin position="212"/>
        <end position="219"/>
    </location>
</feature>
<feature type="helix" evidence="6">
    <location>
        <begin position="224"/>
        <end position="227"/>
    </location>
</feature>
<feature type="strand" evidence="7">
    <location>
        <begin position="230"/>
        <end position="232"/>
    </location>
</feature>
<feature type="strand" evidence="6">
    <location>
        <begin position="244"/>
        <end position="250"/>
    </location>
</feature>
<feature type="helix" evidence="6">
    <location>
        <begin position="251"/>
        <end position="256"/>
    </location>
</feature>
<feature type="helix" evidence="6">
    <location>
        <begin position="260"/>
        <end position="264"/>
    </location>
</feature>
<feature type="helix" evidence="6">
    <location>
        <begin position="265"/>
        <end position="267"/>
    </location>
</feature>
<feature type="helix" evidence="6">
    <location>
        <begin position="273"/>
        <end position="284"/>
    </location>
</feature>
<feature type="helix" evidence="6">
    <location>
        <begin position="290"/>
        <end position="300"/>
    </location>
</feature>
<feature type="helix" evidence="6">
    <location>
        <begin position="302"/>
        <end position="304"/>
    </location>
</feature>
<comment type="function">
    <text evidence="2">Member of a high affinity multicomponent binding-protein-dependent transport system for choline.</text>
</comment>
<comment type="subcellular location">
    <subcellularLocation>
        <location evidence="4">Cell membrane</location>
        <topology evidence="4">Lipid-anchor</topology>
    </subcellularLocation>
</comment>
<comment type="induction">
    <text evidence="3">Repressed by GbsR.</text>
</comment>
<comment type="similarity">
    <text evidence="4">Belongs to the OsmX family.</text>
</comment>
<dbReference type="EMBL" id="U38418">
    <property type="protein sequence ID" value="AAB01534.1"/>
    <property type="molecule type" value="Genomic_DNA"/>
</dbReference>
<dbReference type="EMBL" id="AF008930">
    <property type="protein sequence ID" value="AAC14358.1"/>
    <property type="molecule type" value="Genomic_DNA"/>
</dbReference>
<dbReference type="EMBL" id="AL009126">
    <property type="protein sequence ID" value="CAB15376.1"/>
    <property type="molecule type" value="Genomic_DNA"/>
</dbReference>
<dbReference type="PIR" id="A69670">
    <property type="entry name" value="A69670"/>
</dbReference>
<dbReference type="RefSeq" id="NP_391251.1">
    <property type="nucleotide sequence ID" value="NC_000964.3"/>
</dbReference>
<dbReference type="RefSeq" id="WP_003228372.1">
    <property type="nucleotide sequence ID" value="NZ_OZ025638.1"/>
</dbReference>
<dbReference type="PDB" id="3R6U">
    <property type="method" value="X-ray"/>
    <property type="resolution" value="1.61 A"/>
    <property type="chains" value="A=23-306"/>
</dbReference>
<dbReference type="PDB" id="5NXY">
    <property type="method" value="X-ray"/>
    <property type="resolution" value="1.90 A"/>
    <property type="chains" value="A/C=23-306"/>
</dbReference>
<dbReference type="PDB" id="6EYG">
    <property type="method" value="X-ray"/>
    <property type="resolution" value="1.42 A"/>
    <property type="chains" value="A=1-306"/>
</dbReference>
<dbReference type="PDB" id="6EYH">
    <property type="method" value="X-ray"/>
    <property type="resolution" value="1.60 A"/>
    <property type="chains" value="A=1-306"/>
</dbReference>
<dbReference type="PDB" id="6EYL">
    <property type="method" value="X-ray"/>
    <property type="resolution" value="1.50 A"/>
    <property type="chains" value="A/B=1-306"/>
</dbReference>
<dbReference type="PDB" id="6EYQ">
    <property type="method" value="X-ray"/>
    <property type="resolution" value="1.50 A"/>
    <property type="chains" value="A/B=1-306"/>
</dbReference>
<dbReference type="PDBsum" id="3R6U"/>
<dbReference type="PDBsum" id="5NXY"/>
<dbReference type="PDBsum" id="6EYG"/>
<dbReference type="PDBsum" id="6EYH"/>
<dbReference type="PDBsum" id="6EYL"/>
<dbReference type="PDBsum" id="6EYQ"/>
<dbReference type="SMR" id="Q45462"/>
<dbReference type="FunCoup" id="Q45462">
    <property type="interactions" value="190"/>
</dbReference>
<dbReference type="STRING" id="224308.BSU33710"/>
<dbReference type="TCDB" id="3.A.1.12.3">
    <property type="family name" value="the atp-binding cassette (abc) superfamily"/>
</dbReference>
<dbReference type="PaxDb" id="224308-BSU33710"/>
<dbReference type="EnsemblBacteria" id="CAB15376">
    <property type="protein sequence ID" value="CAB15376"/>
    <property type="gene ID" value="BSU_33710"/>
</dbReference>
<dbReference type="GeneID" id="938475"/>
<dbReference type="KEGG" id="bsu:BSU33710"/>
<dbReference type="PATRIC" id="fig|224308.179.peg.3656"/>
<dbReference type="eggNOG" id="COG1732">
    <property type="taxonomic scope" value="Bacteria"/>
</dbReference>
<dbReference type="InParanoid" id="Q45462"/>
<dbReference type="OrthoDB" id="9801163at2"/>
<dbReference type="PhylomeDB" id="Q45462"/>
<dbReference type="BioCyc" id="BSUB:BSU33710-MONOMER"/>
<dbReference type="BRENDA" id="7.6.2.9">
    <property type="organism ID" value="658"/>
</dbReference>
<dbReference type="EvolutionaryTrace" id="Q45462"/>
<dbReference type="Proteomes" id="UP000001570">
    <property type="component" value="Chromosome"/>
</dbReference>
<dbReference type="GO" id="GO:0043190">
    <property type="term" value="C:ATP-binding cassette (ABC) transporter complex"/>
    <property type="evidence" value="ECO:0007669"/>
    <property type="project" value="InterPro"/>
</dbReference>
<dbReference type="GO" id="GO:0022857">
    <property type="term" value="F:transmembrane transporter activity"/>
    <property type="evidence" value="ECO:0007669"/>
    <property type="project" value="InterPro"/>
</dbReference>
<dbReference type="GO" id="GO:0006865">
    <property type="term" value="P:amino acid transport"/>
    <property type="evidence" value="ECO:0007669"/>
    <property type="project" value="UniProtKB-KW"/>
</dbReference>
<dbReference type="GO" id="GO:0009970">
    <property type="term" value="P:cellular response to sulfate starvation"/>
    <property type="evidence" value="ECO:0000318"/>
    <property type="project" value="GO_Central"/>
</dbReference>
<dbReference type="CDD" id="cd13608">
    <property type="entry name" value="PBP2_OpuCC_like"/>
    <property type="match status" value="1"/>
</dbReference>
<dbReference type="Gene3D" id="3.40.190.120">
    <property type="entry name" value="Osmoprotection protein (prox), domain 2"/>
    <property type="match status" value="1"/>
</dbReference>
<dbReference type="Gene3D" id="3.40.190.10">
    <property type="entry name" value="Periplasmic binding protein-like II"/>
    <property type="match status" value="1"/>
</dbReference>
<dbReference type="InterPro" id="IPR007210">
    <property type="entry name" value="ABC_Gly_betaine_transp_sub-bd"/>
</dbReference>
<dbReference type="PANTHER" id="PTHR30024">
    <property type="entry name" value="ALIPHATIC SULFONATES-BINDING PROTEIN-RELATED"/>
    <property type="match status" value="1"/>
</dbReference>
<dbReference type="PANTHER" id="PTHR30024:SF44">
    <property type="entry name" value="CHOLINE-BINDING PROTEIN"/>
    <property type="match status" value="1"/>
</dbReference>
<dbReference type="Pfam" id="PF04069">
    <property type="entry name" value="OpuAC"/>
    <property type="match status" value="1"/>
</dbReference>
<dbReference type="SUPFAM" id="SSF53850">
    <property type="entry name" value="Periplasmic binding protein-like II"/>
    <property type="match status" value="1"/>
</dbReference>
<dbReference type="PROSITE" id="PS51257">
    <property type="entry name" value="PROKAR_LIPOPROTEIN"/>
    <property type="match status" value="1"/>
</dbReference>
<sequence>MKRKYLKLMIGLALAATLTLSGCSLPGLSAAADQTIKIGAQSMSESEIIASMLGQLIEHHTDLKTTTIKNLGSNAVQQQALMNGEIDIAATRYTGDALTGTLRMEPEKDPDKALALTQREFKKRYDLKWYDSYGFDNTYAFTVSKELADQYHLETVSDVKKWAPQLKLGVDNYWMKLKGNGYQDFTKTYGMTFGGTYPMQIGLVYDAVKSGKMDIVLAYSTDGRIKSYGLKMLKDDKQFFPPYDCSPVVPEKVLKEHPELEGIIKKMLGKIDTATMQELNYEVDGNLKEPSVVAKEYLEKHRYFES</sequence>
<protein>
    <recommendedName>
        <fullName>Choline-binding protein</fullName>
    </recommendedName>
</protein>
<keyword id="KW-0002">3D-structure</keyword>
<keyword id="KW-0029">Amino-acid transport</keyword>
<keyword id="KW-1003">Cell membrane</keyword>
<keyword id="KW-0449">Lipoprotein</keyword>
<keyword id="KW-0472">Membrane</keyword>
<keyword id="KW-0564">Palmitate</keyword>
<keyword id="KW-1185">Reference proteome</keyword>
<keyword id="KW-0732">Signal</keyword>
<keyword id="KW-0813">Transport</keyword>
<evidence type="ECO:0000255" key="1">
    <source>
        <dbReference type="PROSITE-ProRule" id="PRU00303"/>
    </source>
</evidence>
<evidence type="ECO:0000269" key="2">
    <source>
    </source>
</evidence>
<evidence type="ECO:0000269" key="3">
    <source>
    </source>
</evidence>
<evidence type="ECO:0000305" key="4"/>
<evidence type="ECO:0007829" key="5">
    <source>
        <dbReference type="PDB" id="5NXY"/>
    </source>
</evidence>
<evidence type="ECO:0007829" key="6">
    <source>
        <dbReference type="PDB" id="6EYG"/>
    </source>
</evidence>
<evidence type="ECO:0007829" key="7">
    <source>
        <dbReference type="PDB" id="6EYL"/>
    </source>
</evidence>
<organism>
    <name type="scientific">Bacillus subtilis (strain 168)</name>
    <dbReference type="NCBI Taxonomy" id="224308"/>
    <lineage>
        <taxon>Bacteria</taxon>
        <taxon>Bacillati</taxon>
        <taxon>Bacillota</taxon>
        <taxon>Bacilli</taxon>
        <taxon>Bacillales</taxon>
        <taxon>Bacillaceae</taxon>
        <taxon>Bacillus</taxon>
    </lineage>
</organism>
<name>OPUBC_BACSU</name>
<accession>Q45462</accession>
<accession>O34432</accession>
<gene>
    <name type="primary">opuBC</name>
    <name type="synonym">proX</name>
    <name type="ordered locus">BSU33710</name>
</gene>
<reference key="1">
    <citation type="journal article" date="1995" name="J. Bacteriol.">
        <title>Characterization of a chimeric proU operon in a subtilin-producing mutant of Bacillus subtilis 168.</title>
        <authorList>
            <person name="Lin Y."/>
            <person name="Hansen J.N."/>
        </authorList>
    </citation>
    <scope>NUCLEOTIDE SEQUENCE [GENOMIC DNA]</scope>
    <source>
        <strain>ATCC 6633 / PCI 219 / NRS 231</strain>
    </source>
</reference>
<reference key="2">
    <citation type="journal article" date="1999" name="Mol. Microbiol.">
        <title>Two evolutionarily closely related ABC transporters mediate the uptake of choline for synthesis of the osmoprotectant glycine betaine in Bacillus subtilis.</title>
        <authorList>
            <person name="Kappes R.M."/>
            <person name="Kempf B."/>
            <person name="Kneip S."/>
            <person name="Boch J."/>
            <person name="Gade J."/>
            <person name="Meier-Wagner J."/>
            <person name="Bremer E."/>
        </authorList>
    </citation>
    <scope>NUCLEOTIDE SEQUENCE [GENOMIC DNA]</scope>
    <scope>FUNCTION</scope>
    <source>
        <strain>168 / JH642</strain>
    </source>
</reference>
<reference key="3">
    <citation type="journal article" date="1997" name="Nature">
        <title>The complete genome sequence of the Gram-positive bacterium Bacillus subtilis.</title>
        <authorList>
            <person name="Kunst F."/>
            <person name="Ogasawara N."/>
            <person name="Moszer I."/>
            <person name="Albertini A.M."/>
            <person name="Alloni G."/>
            <person name="Azevedo V."/>
            <person name="Bertero M.G."/>
            <person name="Bessieres P."/>
            <person name="Bolotin A."/>
            <person name="Borchert S."/>
            <person name="Borriss R."/>
            <person name="Boursier L."/>
            <person name="Brans A."/>
            <person name="Braun M."/>
            <person name="Brignell S.C."/>
            <person name="Bron S."/>
            <person name="Brouillet S."/>
            <person name="Bruschi C.V."/>
            <person name="Caldwell B."/>
            <person name="Capuano V."/>
            <person name="Carter N.M."/>
            <person name="Choi S.-K."/>
            <person name="Codani J.-J."/>
            <person name="Connerton I.F."/>
            <person name="Cummings N.J."/>
            <person name="Daniel R.A."/>
            <person name="Denizot F."/>
            <person name="Devine K.M."/>
            <person name="Duesterhoeft A."/>
            <person name="Ehrlich S.D."/>
            <person name="Emmerson P.T."/>
            <person name="Entian K.-D."/>
            <person name="Errington J."/>
            <person name="Fabret C."/>
            <person name="Ferrari E."/>
            <person name="Foulger D."/>
            <person name="Fritz C."/>
            <person name="Fujita M."/>
            <person name="Fujita Y."/>
            <person name="Fuma S."/>
            <person name="Galizzi A."/>
            <person name="Galleron N."/>
            <person name="Ghim S.-Y."/>
            <person name="Glaser P."/>
            <person name="Goffeau A."/>
            <person name="Golightly E.J."/>
            <person name="Grandi G."/>
            <person name="Guiseppi G."/>
            <person name="Guy B.J."/>
            <person name="Haga K."/>
            <person name="Haiech J."/>
            <person name="Harwood C.R."/>
            <person name="Henaut A."/>
            <person name="Hilbert H."/>
            <person name="Holsappel S."/>
            <person name="Hosono S."/>
            <person name="Hullo M.-F."/>
            <person name="Itaya M."/>
            <person name="Jones L.-M."/>
            <person name="Joris B."/>
            <person name="Karamata D."/>
            <person name="Kasahara Y."/>
            <person name="Klaerr-Blanchard M."/>
            <person name="Klein C."/>
            <person name="Kobayashi Y."/>
            <person name="Koetter P."/>
            <person name="Koningstein G."/>
            <person name="Krogh S."/>
            <person name="Kumano M."/>
            <person name="Kurita K."/>
            <person name="Lapidus A."/>
            <person name="Lardinois S."/>
            <person name="Lauber J."/>
            <person name="Lazarevic V."/>
            <person name="Lee S.-M."/>
            <person name="Levine A."/>
            <person name="Liu H."/>
            <person name="Masuda S."/>
            <person name="Mauel C."/>
            <person name="Medigue C."/>
            <person name="Medina N."/>
            <person name="Mellado R.P."/>
            <person name="Mizuno M."/>
            <person name="Moestl D."/>
            <person name="Nakai S."/>
            <person name="Noback M."/>
            <person name="Noone D."/>
            <person name="O'Reilly M."/>
            <person name="Ogawa K."/>
            <person name="Ogiwara A."/>
            <person name="Oudega B."/>
            <person name="Park S.-H."/>
            <person name="Parro V."/>
            <person name="Pohl T.M."/>
            <person name="Portetelle D."/>
            <person name="Porwollik S."/>
            <person name="Prescott A.M."/>
            <person name="Presecan E."/>
            <person name="Pujic P."/>
            <person name="Purnelle B."/>
            <person name="Rapoport G."/>
            <person name="Rey M."/>
            <person name="Reynolds S."/>
            <person name="Rieger M."/>
            <person name="Rivolta C."/>
            <person name="Rocha E."/>
            <person name="Roche B."/>
            <person name="Rose M."/>
            <person name="Sadaie Y."/>
            <person name="Sato T."/>
            <person name="Scanlan E."/>
            <person name="Schleich S."/>
            <person name="Schroeter R."/>
            <person name="Scoffone F."/>
            <person name="Sekiguchi J."/>
            <person name="Sekowska A."/>
            <person name="Seror S.J."/>
            <person name="Serror P."/>
            <person name="Shin B.-S."/>
            <person name="Soldo B."/>
            <person name="Sorokin A."/>
            <person name="Tacconi E."/>
            <person name="Takagi T."/>
            <person name="Takahashi H."/>
            <person name="Takemaru K."/>
            <person name="Takeuchi M."/>
            <person name="Tamakoshi A."/>
            <person name="Tanaka T."/>
            <person name="Terpstra P."/>
            <person name="Tognoni A."/>
            <person name="Tosato V."/>
            <person name="Uchiyama S."/>
            <person name="Vandenbol M."/>
            <person name="Vannier F."/>
            <person name="Vassarotti A."/>
            <person name="Viari A."/>
            <person name="Wambutt R."/>
            <person name="Wedler E."/>
            <person name="Wedler H."/>
            <person name="Weitzenegger T."/>
            <person name="Winters P."/>
            <person name="Wipat A."/>
            <person name="Yamamoto H."/>
            <person name="Yamane K."/>
            <person name="Yasumoto K."/>
            <person name="Yata K."/>
            <person name="Yoshida K."/>
            <person name="Yoshikawa H.-F."/>
            <person name="Zumstein E."/>
            <person name="Yoshikawa H."/>
            <person name="Danchin A."/>
        </authorList>
    </citation>
    <scope>NUCLEOTIDE SEQUENCE [LARGE SCALE GENOMIC DNA]</scope>
    <source>
        <strain>168</strain>
    </source>
</reference>
<reference key="4">
    <citation type="journal article" date="2012" name="J. Bacteriol.">
        <title>Genetic control of osmoadaptive glycine betaine synthesis in Bacillus subtilis through the choline-sensing and glycine betaine-responsive GbsR repressor.</title>
        <authorList>
            <person name="Nau-Wagner G."/>
            <person name="Opper D."/>
            <person name="Rolbetzki A."/>
            <person name="Boch J."/>
            <person name="Kempf B."/>
            <person name="Hoffmann T."/>
            <person name="Bremer E."/>
        </authorList>
    </citation>
    <scope>INDUCTION</scope>
    <source>
        <strain>168 / JH642</strain>
    </source>
</reference>
<proteinExistence type="evidence at protein level"/>